<proteinExistence type="inferred from homology"/>
<feature type="chain" id="PRO_1000213559" description="Amino-acid acetyltransferase">
    <location>
        <begin position="1"/>
        <end position="441"/>
    </location>
</feature>
<feature type="domain" description="N-acetyltransferase" evidence="1">
    <location>
        <begin position="295"/>
        <end position="434"/>
    </location>
</feature>
<comment type="catalytic activity">
    <reaction evidence="1">
        <text>L-glutamate + acetyl-CoA = N-acetyl-L-glutamate + CoA + H(+)</text>
        <dbReference type="Rhea" id="RHEA:24292"/>
        <dbReference type="ChEBI" id="CHEBI:15378"/>
        <dbReference type="ChEBI" id="CHEBI:29985"/>
        <dbReference type="ChEBI" id="CHEBI:44337"/>
        <dbReference type="ChEBI" id="CHEBI:57287"/>
        <dbReference type="ChEBI" id="CHEBI:57288"/>
        <dbReference type="EC" id="2.3.1.1"/>
    </reaction>
</comment>
<comment type="pathway">
    <text evidence="1">Amino-acid biosynthesis; L-arginine biosynthesis; N(2)-acetyl-L-ornithine from L-glutamate: step 1/4.</text>
</comment>
<comment type="subunit">
    <text evidence="1">Homohexamer.</text>
</comment>
<comment type="subcellular location">
    <subcellularLocation>
        <location evidence="1">Cytoplasm</location>
    </subcellularLocation>
</comment>
<comment type="similarity">
    <text evidence="1">Belongs to the acetyltransferase family. ArgA subfamily.</text>
</comment>
<keyword id="KW-0012">Acyltransferase</keyword>
<keyword id="KW-0028">Amino-acid biosynthesis</keyword>
<keyword id="KW-0055">Arginine biosynthesis</keyword>
<keyword id="KW-0963">Cytoplasm</keyword>
<keyword id="KW-0808">Transferase</keyword>
<gene>
    <name evidence="1" type="primary">argA</name>
    <name type="ordered locus">PC1_0919</name>
</gene>
<organism>
    <name type="scientific">Pectobacterium carotovorum subsp. carotovorum (strain PC1)</name>
    <dbReference type="NCBI Taxonomy" id="561230"/>
    <lineage>
        <taxon>Bacteria</taxon>
        <taxon>Pseudomonadati</taxon>
        <taxon>Pseudomonadota</taxon>
        <taxon>Gammaproteobacteria</taxon>
        <taxon>Enterobacterales</taxon>
        <taxon>Pectobacteriaceae</taxon>
        <taxon>Pectobacterium</taxon>
    </lineage>
</organism>
<reference key="1">
    <citation type="submission" date="2009-07" db="EMBL/GenBank/DDBJ databases">
        <title>Complete sequence of Pectobacterium carotovorum subsp. carotovorum PC1.</title>
        <authorList>
            <consortium name="US DOE Joint Genome Institute"/>
            <person name="Lucas S."/>
            <person name="Copeland A."/>
            <person name="Lapidus A."/>
            <person name="Glavina del Rio T."/>
            <person name="Tice H."/>
            <person name="Bruce D."/>
            <person name="Goodwin L."/>
            <person name="Pitluck S."/>
            <person name="Munk A.C."/>
            <person name="Brettin T."/>
            <person name="Detter J.C."/>
            <person name="Han C."/>
            <person name="Tapia R."/>
            <person name="Larimer F."/>
            <person name="Land M."/>
            <person name="Hauser L."/>
            <person name="Kyrpides N."/>
            <person name="Mikhailova N."/>
            <person name="Balakrishnan V."/>
            <person name="Glasner J."/>
            <person name="Perna N.T."/>
        </authorList>
    </citation>
    <scope>NUCLEOTIDE SEQUENCE [LARGE SCALE GENOMIC DNA]</scope>
    <source>
        <strain>PC1</strain>
    </source>
</reference>
<protein>
    <recommendedName>
        <fullName evidence="1">Amino-acid acetyltransferase</fullName>
        <ecNumber evidence="1">2.3.1.1</ecNumber>
    </recommendedName>
    <alternativeName>
        <fullName evidence="1">N-acetylglutamate synthase</fullName>
        <shortName evidence="1">AGS</shortName>
        <shortName evidence="1">NAGS</shortName>
    </alternativeName>
</protein>
<accession>C6DAG1</accession>
<name>ARGA_PECCP</name>
<sequence>MKERSTELVQGFRHSVPYINAHRGKTFVIMLGGEAIEHANFSSIVNDIGLLHSLGIKLVVVYGARPQIDANLTTHHYEPHYHKNTRITDSTTLELVKQAAGMLQLDITARLSMSLNNTPLQGAHINVVSGNFIIAQPLGVDDGVDYCHSGRIRRIDEEAVHRQLNSGAIVLLGPVAVSVTGESFNLTSEEVATQLAIKLKAEKMIGFCSSQGVTNEEGSIISELFPDDAQRRIDTLEQAGDYHSGTVRFLRGAVKACRSGVRRSHLISYQDDGALLQELFSRDGIGTQIVMESAEQVRRATINDIGGILELIRPLEEQGILVRRSREQLEMEIDKFTVVVRDNLTIACAALYPFPEESIGEMACVAVHPDYRSSSRGDMLLMRIAAQARQQGLQKLFVLTTHSIHWFQERGFLPAEVEMLPKKKQALYNYQRRSKILVLDL</sequence>
<dbReference type="EC" id="2.3.1.1" evidence="1"/>
<dbReference type="EMBL" id="CP001657">
    <property type="protein sequence ID" value="ACT11969.1"/>
    <property type="molecule type" value="Genomic_DNA"/>
</dbReference>
<dbReference type="SMR" id="C6DAG1"/>
<dbReference type="STRING" id="561230.PC1_0919"/>
<dbReference type="KEGG" id="pct:PC1_0919"/>
<dbReference type="eggNOG" id="COG0548">
    <property type="taxonomic scope" value="Bacteria"/>
</dbReference>
<dbReference type="eggNOG" id="COG1246">
    <property type="taxonomic scope" value="Bacteria"/>
</dbReference>
<dbReference type="HOGENOM" id="CLU_024773_0_0_6"/>
<dbReference type="OrthoDB" id="9802238at2"/>
<dbReference type="UniPathway" id="UPA00068">
    <property type="reaction ID" value="UER00106"/>
</dbReference>
<dbReference type="Proteomes" id="UP000002736">
    <property type="component" value="Chromosome"/>
</dbReference>
<dbReference type="GO" id="GO:0005737">
    <property type="term" value="C:cytoplasm"/>
    <property type="evidence" value="ECO:0007669"/>
    <property type="project" value="UniProtKB-SubCell"/>
</dbReference>
<dbReference type="GO" id="GO:0004042">
    <property type="term" value="F:L-glutamate N-acetyltransferase activity"/>
    <property type="evidence" value="ECO:0007669"/>
    <property type="project" value="UniProtKB-UniRule"/>
</dbReference>
<dbReference type="GO" id="GO:0006526">
    <property type="term" value="P:L-arginine biosynthetic process"/>
    <property type="evidence" value="ECO:0007669"/>
    <property type="project" value="UniProtKB-UniRule"/>
</dbReference>
<dbReference type="CDD" id="cd04237">
    <property type="entry name" value="AAK_NAGS-ABP"/>
    <property type="match status" value="1"/>
</dbReference>
<dbReference type="CDD" id="cd04301">
    <property type="entry name" value="NAT_SF"/>
    <property type="match status" value="1"/>
</dbReference>
<dbReference type="FunFam" id="3.40.1160.10:FF:000005">
    <property type="entry name" value="Amino-acid acetyltransferase"/>
    <property type="match status" value="1"/>
</dbReference>
<dbReference type="FunFam" id="3.40.630.30:FF:000009">
    <property type="entry name" value="Amino-acid acetyltransferase"/>
    <property type="match status" value="1"/>
</dbReference>
<dbReference type="Gene3D" id="3.40.630.30">
    <property type="match status" value="1"/>
</dbReference>
<dbReference type="Gene3D" id="3.40.1160.10">
    <property type="entry name" value="Acetylglutamate kinase-like"/>
    <property type="match status" value="1"/>
</dbReference>
<dbReference type="HAMAP" id="MF_01105">
    <property type="entry name" value="N_acetyl_glu_synth"/>
    <property type="match status" value="1"/>
</dbReference>
<dbReference type="InterPro" id="IPR036393">
    <property type="entry name" value="AceGlu_kinase-like_sf"/>
</dbReference>
<dbReference type="InterPro" id="IPR016181">
    <property type="entry name" value="Acyl_CoA_acyltransferase"/>
</dbReference>
<dbReference type="InterPro" id="IPR001048">
    <property type="entry name" value="Asp/Glu/Uridylate_kinase"/>
</dbReference>
<dbReference type="InterPro" id="IPR000182">
    <property type="entry name" value="GNAT_dom"/>
</dbReference>
<dbReference type="InterPro" id="IPR033719">
    <property type="entry name" value="NAGS_kin"/>
</dbReference>
<dbReference type="InterPro" id="IPR010167">
    <property type="entry name" value="NH2A_AcTrfase"/>
</dbReference>
<dbReference type="NCBIfam" id="TIGR01890">
    <property type="entry name" value="N-Ac-Glu-synth"/>
    <property type="match status" value="1"/>
</dbReference>
<dbReference type="NCBIfam" id="NF003641">
    <property type="entry name" value="PRK05279.1"/>
    <property type="match status" value="1"/>
</dbReference>
<dbReference type="PANTHER" id="PTHR30602">
    <property type="entry name" value="AMINO-ACID ACETYLTRANSFERASE"/>
    <property type="match status" value="1"/>
</dbReference>
<dbReference type="PANTHER" id="PTHR30602:SF12">
    <property type="entry name" value="AMINO-ACID ACETYLTRANSFERASE NAGS1, CHLOROPLASTIC-RELATED"/>
    <property type="match status" value="1"/>
</dbReference>
<dbReference type="Pfam" id="PF00696">
    <property type="entry name" value="AA_kinase"/>
    <property type="match status" value="1"/>
</dbReference>
<dbReference type="Pfam" id="PF00583">
    <property type="entry name" value="Acetyltransf_1"/>
    <property type="match status" value="1"/>
</dbReference>
<dbReference type="PIRSF" id="PIRSF000423">
    <property type="entry name" value="ArgA"/>
    <property type="match status" value="1"/>
</dbReference>
<dbReference type="SUPFAM" id="SSF55729">
    <property type="entry name" value="Acyl-CoA N-acyltransferases (Nat)"/>
    <property type="match status" value="1"/>
</dbReference>
<dbReference type="SUPFAM" id="SSF53633">
    <property type="entry name" value="Carbamate kinase-like"/>
    <property type="match status" value="1"/>
</dbReference>
<dbReference type="PROSITE" id="PS51186">
    <property type="entry name" value="GNAT"/>
    <property type="match status" value="1"/>
</dbReference>
<evidence type="ECO:0000255" key="1">
    <source>
        <dbReference type="HAMAP-Rule" id="MF_01105"/>
    </source>
</evidence>